<sequence length="357" mass="39203">MGIYLSTPKTDKFSEDGENHKLRYGLSSMQGWRASMEDAHAAILDLDDNTSFLGVYDGHGGKVVSKFCAKYLHQQVLSDEAYAAGDVGTSLQKAFFRMDEMMQGQRGWRELAVLGDKINKFSGMIEGLIWSPRSGDSANKPDAWAFEEGPHSDFAGPNSGSTACVAVVRDKQLFVANAGDSRCVISRKNQAYNLSRDHKPDLEAEKERILKAGGFIHAGRVNGSLNLSRAIGDMEFKQNKFLPSEKQIVTASPDVNTVELCDDDDFLVLACDGIWDCMTSQQLVDFIHEQLNSETKLSVVCEKVLDRCLAPNTSGGEGCDNMTMILVRFKNPTPSETELKPEASQAEGNHDEPSSSN</sequence>
<gene>
    <name type="ordered locus">At4g31860</name>
    <name type="ORF">F11C18.60</name>
</gene>
<proteinExistence type="evidence at transcript level"/>
<evidence type="ECO:0000250" key="1"/>
<evidence type="ECO:0000255" key="2">
    <source>
        <dbReference type="PROSITE-ProRule" id="PRU01082"/>
    </source>
</evidence>
<evidence type="ECO:0000256" key="3">
    <source>
        <dbReference type="SAM" id="MobiDB-lite"/>
    </source>
</evidence>
<evidence type="ECO:0000303" key="4">
    <source>
    </source>
</evidence>
<evidence type="ECO:0000305" key="5"/>
<comment type="catalytic activity">
    <reaction>
        <text>O-phospho-L-seryl-[protein] + H2O = L-seryl-[protein] + phosphate</text>
        <dbReference type="Rhea" id="RHEA:20629"/>
        <dbReference type="Rhea" id="RHEA-COMP:9863"/>
        <dbReference type="Rhea" id="RHEA-COMP:11604"/>
        <dbReference type="ChEBI" id="CHEBI:15377"/>
        <dbReference type="ChEBI" id="CHEBI:29999"/>
        <dbReference type="ChEBI" id="CHEBI:43474"/>
        <dbReference type="ChEBI" id="CHEBI:83421"/>
        <dbReference type="EC" id="3.1.3.16"/>
    </reaction>
</comment>
<comment type="catalytic activity">
    <reaction>
        <text>O-phospho-L-threonyl-[protein] + H2O = L-threonyl-[protein] + phosphate</text>
        <dbReference type="Rhea" id="RHEA:47004"/>
        <dbReference type="Rhea" id="RHEA-COMP:11060"/>
        <dbReference type="Rhea" id="RHEA-COMP:11605"/>
        <dbReference type="ChEBI" id="CHEBI:15377"/>
        <dbReference type="ChEBI" id="CHEBI:30013"/>
        <dbReference type="ChEBI" id="CHEBI:43474"/>
        <dbReference type="ChEBI" id="CHEBI:61977"/>
        <dbReference type="EC" id="3.1.3.16"/>
    </reaction>
</comment>
<comment type="cofactor">
    <cofactor evidence="1">
        <name>Mg(2+)</name>
        <dbReference type="ChEBI" id="CHEBI:18420"/>
    </cofactor>
    <cofactor evidence="1">
        <name>Mn(2+)</name>
        <dbReference type="ChEBI" id="CHEBI:29035"/>
    </cofactor>
    <text evidence="1">Binds 2 magnesium or manganese ions per subunit.</text>
</comment>
<comment type="alternative products">
    <event type="alternative splicing"/>
    <isoform>
        <id>Q9SZ53-1</id>
        <name>1</name>
        <sequence type="displayed"/>
    </isoform>
    <isoform>
        <id>Q9SZ53-2</id>
        <name>2</name>
        <sequence type="described" ref="VSP_036775"/>
    </isoform>
</comment>
<comment type="similarity">
    <text evidence="5">Belongs to the PP2C family.</text>
</comment>
<comment type="sequence caution" evidence="5">
    <conflict type="miscellaneous discrepancy">
        <sequence resource="EMBL" id="BX827528"/>
    </conflict>
    <text>Sequencing errors.</text>
</comment>
<organism>
    <name type="scientific">Arabidopsis thaliana</name>
    <name type="common">Mouse-ear cress</name>
    <dbReference type="NCBI Taxonomy" id="3702"/>
    <lineage>
        <taxon>Eukaryota</taxon>
        <taxon>Viridiplantae</taxon>
        <taxon>Streptophyta</taxon>
        <taxon>Embryophyta</taxon>
        <taxon>Tracheophyta</taxon>
        <taxon>Spermatophyta</taxon>
        <taxon>Magnoliopsida</taxon>
        <taxon>eudicotyledons</taxon>
        <taxon>Gunneridae</taxon>
        <taxon>Pentapetalae</taxon>
        <taxon>rosids</taxon>
        <taxon>malvids</taxon>
        <taxon>Brassicales</taxon>
        <taxon>Brassicaceae</taxon>
        <taxon>Camelineae</taxon>
        <taxon>Arabidopsis</taxon>
    </lineage>
</organism>
<dbReference type="EC" id="3.1.3.16"/>
<dbReference type="EMBL" id="AL049607">
    <property type="protein sequence ID" value="CAB40756.1"/>
    <property type="molecule type" value="Genomic_DNA"/>
</dbReference>
<dbReference type="EMBL" id="AL161579">
    <property type="protein sequence ID" value="CAB79904.1"/>
    <property type="molecule type" value="Genomic_DNA"/>
</dbReference>
<dbReference type="EMBL" id="CP002687">
    <property type="protein sequence ID" value="AEE85968.1"/>
    <property type="molecule type" value="Genomic_DNA"/>
</dbReference>
<dbReference type="EMBL" id="CP002687">
    <property type="protein sequence ID" value="AEE85969.1"/>
    <property type="molecule type" value="Genomic_DNA"/>
</dbReference>
<dbReference type="EMBL" id="AY057611">
    <property type="protein sequence ID" value="AAL14406.1"/>
    <property type="molecule type" value="mRNA"/>
</dbReference>
<dbReference type="EMBL" id="AY113024">
    <property type="protein sequence ID" value="AAM47332.1"/>
    <property type="molecule type" value="mRNA"/>
</dbReference>
<dbReference type="EMBL" id="BX827528">
    <property type="status" value="NOT_ANNOTATED_CDS"/>
    <property type="molecule type" value="mRNA"/>
</dbReference>
<dbReference type="PIR" id="T06308">
    <property type="entry name" value="T06308"/>
</dbReference>
<dbReference type="RefSeq" id="NP_194914.1">
    <molecule id="Q9SZ53-1"/>
    <property type="nucleotide sequence ID" value="NM_119336.4"/>
</dbReference>
<dbReference type="RefSeq" id="NP_974656.1">
    <molecule id="Q9SZ53-2"/>
    <property type="nucleotide sequence ID" value="NM_202927.2"/>
</dbReference>
<dbReference type="SMR" id="Q9SZ53"/>
<dbReference type="BioGRID" id="14601">
    <property type="interactions" value="3"/>
</dbReference>
<dbReference type="FunCoup" id="Q9SZ53">
    <property type="interactions" value="4653"/>
</dbReference>
<dbReference type="IntAct" id="Q9SZ53">
    <property type="interactions" value="6"/>
</dbReference>
<dbReference type="MINT" id="Q9SZ53"/>
<dbReference type="STRING" id="3702.Q9SZ53"/>
<dbReference type="iPTMnet" id="Q9SZ53"/>
<dbReference type="PaxDb" id="3702-AT4G31860.1"/>
<dbReference type="ProteomicsDB" id="248724">
    <molecule id="Q9SZ53-1"/>
</dbReference>
<dbReference type="EnsemblPlants" id="AT4G31860.1">
    <molecule id="Q9SZ53-1"/>
    <property type="protein sequence ID" value="AT4G31860.1"/>
    <property type="gene ID" value="AT4G31860"/>
</dbReference>
<dbReference type="EnsemblPlants" id="AT4G31860.2">
    <molecule id="Q9SZ53-2"/>
    <property type="protein sequence ID" value="AT4G31860.2"/>
    <property type="gene ID" value="AT4G31860"/>
</dbReference>
<dbReference type="GeneID" id="829315"/>
<dbReference type="Gramene" id="AT4G31860.1">
    <molecule id="Q9SZ53-1"/>
    <property type="protein sequence ID" value="AT4G31860.1"/>
    <property type="gene ID" value="AT4G31860"/>
</dbReference>
<dbReference type="Gramene" id="AT4G31860.2">
    <molecule id="Q9SZ53-2"/>
    <property type="protein sequence ID" value="AT4G31860.2"/>
    <property type="gene ID" value="AT4G31860"/>
</dbReference>
<dbReference type="KEGG" id="ath:AT4G31860"/>
<dbReference type="Araport" id="AT4G31860"/>
<dbReference type="TAIR" id="AT4G31860"/>
<dbReference type="eggNOG" id="KOG0698">
    <property type="taxonomic scope" value="Eukaryota"/>
</dbReference>
<dbReference type="InParanoid" id="Q9SZ53"/>
<dbReference type="OMA" id="GPGIRNQ"/>
<dbReference type="PhylomeDB" id="Q9SZ53"/>
<dbReference type="PRO" id="PR:Q9SZ53"/>
<dbReference type="Proteomes" id="UP000006548">
    <property type="component" value="Chromosome 4"/>
</dbReference>
<dbReference type="ExpressionAtlas" id="Q9SZ53">
    <property type="expression patterns" value="baseline and differential"/>
</dbReference>
<dbReference type="GO" id="GO:0005886">
    <property type="term" value="C:plasma membrane"/>
    <property type="evidence" value="ECO:0007005"/>
    <property type="project" value="TAIR"/>
</dbReference>
<dbReference type="GO" id="GO:0046872">
    <property type="term" value="F:metal ion binding"/>
    <property type="evidence" value="ECO:0007669"/>
    <property type="project" value="UniProtKB-KW"/>
</dbReference>
<dbReference type="GO" id="GO:0004722">
    <property type="term" value="F:protein serine/threonine phosphatase activity"/>
    <property type="evidence" value="ECO:0007669"/>
    <property type="project" value="UniProtKB-EC"/>
</dbReference>
<dbReference type="CDD" id="cd00143">
    <property type="entry name" value="PP2Cc"/>
    <property type="match status" value="1"/>
</dbReference>
<dbReference type="Gene3D" id="3.60.40.10">
    <property type="entry name" value="PPM-type phosphatase domain"/>
    <property type="match status" value="1"/>
</dbReference>
<dbReference type="InterPro" id="IPR015655">
    <property type="entry name" value="PP2C"/>
</dbReference>
<dbReference type="InterPro" id="IPR000222">
    <property type="entry name" value="PP2C_BS"/>
</dbReference>
<dbReference type="InterPro" id="IPR036457">
    <property type="entry name" value="PPM-type-like_dom_sf"/>
</dbReference>
<dbReference type="InterPro" id="IPR001932">
    <property type="entry name" value="PPM-type_phosphatase-like_dom"/>
</dbReference>
<dbReference type="PANTHER" id="PTHR13832">
    <property type="entry name" value="PROTEIN PHOSPHATASE 2C"/>
    <property type="match status" value="1"/>
</dbReference>
<dbReference type="PANTHER" id="PTHR13832:SF840">
    <property type="entry name" value="PROTEIN PHOSPHATASE 2C 60-RELATED"/>
    <property type="match status" value="1"/>
</dbReference>
<dbReference type="Pfam" id="PF00481">
    <property type="entry name" value="PP2C"/>
    <property type="match status" value="2"/>
</dbReference>
<dbReference type="SMART" id="SM00332">
    <property type="entry name" value="PP2Cc"/>
    <property type="match status" value="1"/>
</dbReference>
<dbReference type="SUPFAM" id="SSF81606">
    <property type="entry name" value="PP2C-like"/>
    <property type="match status" value="1"/>
</dbReference>
<dbReference type="PROSITE" id="PS01032">
    <property type="entry name" value="PPM_1"/>
    <property type="match status" value="1"/>
</dbReference>
<dbReference type="PROSITE" id="PS51746">
    <property type="entry name" value="PPM_2"/>
    <property type="match status" value="1"/>
</dbReference>
<accession>Q9SZ53</accession>
<accession>Q3E9T0</accession>
<feature type="chain" id="PRO_0000367982" description="Probable protein phosphatase 2C 60">
    <location>
        <begin position="1"/>
        <end position="357"/>
    </location>
</feature>
<feature type="domain" description="PPM-type phosphatase" evidence="2">
    <location>
        <begin position="23"/>
        <end position="329"/>
    </location>
</feature>
<feature type="region of interest" description="Disordered" evidence="3">
    <location>
        <begin position="331"/>
        <end position="357"/>
    </location>
</feature>
<feature type="compositionally biased region" description="Basic and acidic residues" evidence="3">
    <location>
        <begin position="348"/>
        <end position="357"/>
    </location>
</feature>
<feature type="binding site" evidence="1">
    <location>
        <position position="57"/>
    </location>
    <ligand>
        <name>Mn(2+)</name>
        <dbReference type="ChEBI" id="CHEBI:29035"/>
        <label>1</label>
    </ligand>
</feature>
<feature type="binding site" evidence="1">
    <location>
        <position position="57"/>
    </location>
    <ligand>
        <name>Mn(2+)</name>
        <dbReference type="ChEBI" id="CHEBI:29035"/>
        <label>2</label>
    </ligand>
</feature>
<feature type="binding site" evidence="1">
    <location>
        <position position="58"/>
    </location>
    <ligand>
        <name>Mn(2+)</name>
        <dbReference type="ChEBI" id="CHEBI:29035"/>
        <label>1</label>
    </ligand>
</feature>
<feature type="binding site" evidence="1">
    <location>
        <position position="272"/>
    </location>
    <ligand>
        <name>Mn(2+)</name>
        <dbReference type="ChEBI" id="CHEBI:29035"/>
        <label>2</label>
    </ligand>
</feature>
<feature type="binding site" evidence="1">
    <location>
        <position position="320"/>
    </location>
    <ligand>
        <name>Mn(2+)</name>
        <dbReference type="ChEBI" id="CHEBI:29035"/>
        <label>2</label>
    </ligand>
</feature>
<feature type="splice variant" id="VSP_036775" description="In isoform 2." evidence="4">
    <location>
        <begin position="276"/>
        <end position="357"/>
    </location>
</feature>
<name>P2C60_ARATH</name>
<keyword id="KW-0025">Alternative splicing</keyword>
<keyword id="KW-0378">Hydrolase</keyword>
<keyword id="KW-0460">Magnesium</keyword>
<keyword id="KW-0464">Manganese</keyword>
<keyword id="KW-0479">Metal-binding</keyword>
<keyword id="KW-0904">Protein phosphatase</keyword>
<keyword id="KW-1185">Reference proteome</keyword>
<protein>
    <recommendedName>
        <fullName>Probable protein phosphatase 2C 60</fullName>
        <shortName>AtPP2C60</shortName>
        <ecNumber>3.1.3.16</ecNumber>
    </recommendedName>
</protein>
<reference key="1">
    <citation type="journal article" date="1999" name="Nature">
        <title>Sequence and analysis of chromosome 4 of the plant Arabidopsis thaliana.</title>
        <authorList>
            <person name="Mayer K.F.X."/>
            <person name="Schueller C."/>
            <person name="Wambutt R."/>
            <person name="Murphy G."/>
            <person name="Volckaert G."/>
            <person name="Pohl T."/>
            <person name="Duesterhoeft A."/>
            <person name="Stiekema W."/>
            <person name="Entian K.-D."/>
            <person name="Terryn N."/>
            <person name="Harris B."/>
            <person name="Ansorge W."/>
            <person name="Brandt P."/>
            <person name="Grivell L.A."/>
            <person name="Rieger M."/>
            <person name="Weichselgartner M."/>
            <person name="de Simone V."/>
            <person name="Obermaier B."/>
            <person name="Mache R."/>
            <person name="Mueller M."/>
            <person name="Kreis M."/>
            <person name="Delseny M."/>
            <person name="Puigdomenech P."/>
            <person name="Watson M."/>
            <person name="Schmidtheini T."/>
            <person name="Reichert B."/>
            <person name="Portetelle D."/>
            <person name="Perez-Alonso M."/>
            <person name="Boutry M."/>
            <person name="Bancroft I."/>
            <person name="Vos P."/>
            <person name="Hoheisel J."/>
            <person name="Zimmermann W."/>
            <person name="Wedler H."/>
            <person name="Ridley P."/>
            <person name="Langham S.-A."/>
            <person name="McCullagh B."/>
            <person name="Bilham L."/>
            <person name="Robben J."/>
            <person name="van der Schueren J."/>
            <person name="Grymonprez B."/>
            <person name="Chuang Y.-J."/>
            <person name="Vandenbussche F."/>
            <person name="Braeken M."/>
            <person name="Weltjens I."/>
            <person name="Voet M."/>
            <person name="Bastiaens I."/>
            <person name="Aert R."/>
            <person name="Defoor E."/>
            <person name="Weitzenegger T."/>
            <person name="Bothe G."/>
            <person name="Ramsperger U."/>
            <person name="Hilbert H."/>
            <person name="Braun M."/>
            <person name="Holzer E."/>
            <person name="Brandt A."/>
            <person name="Peters S."/>
            <person name="van Staveren M."/>
            <person name="Dirkse W."/>
            <person name="Mooijman P."/>
            <person name="Klein Lankhorst R."/>
            <person name="Rose M."/>
            <person name="Hauf J."/>
            <person name="Koetter P."/>
            <person name="Berneiser S."/>
            <person name="Hempel S."/>
            <person name="Feldpausch M."/>
            <person name="Lamberth S."/>
            <person name="Van den Daele H."/>
            <person name="De Keyser A."/>
            <person name="Buysshaert C."/>
            <person name="Gielen J."/>
            <person name="Villarroel R."/>
            <person name="De Clercq R."/>
            <person name="van Montagu M."/>
            <person name="Rogers J."/>
            <person name="Cronin A."/>
            <person name="Quail M.A."/>
            <person name="Bray-Allen S."/>
            <person name="Clark L."/>
            <person name="Doggett J."/>
            <person name="Hall S."/>
            <person name="Kay M."/>
            <person name="Lennard N."/>
            <person name="McLay K."/>
            <person name="Mayes R."/>
            <person name="Pettett A."/>
            <person name="Rajandream M.A."/>
            <person name="Lyne M."/>
            <person name="Benes V."/>
            <person name="Rechmann S."/>
            <person name="Borkova D."/>
            <person name="Bloecker H."/>
            <person name="Scharfe M."/>
            <person name="Grimm M."/>
            <person name="Loehnert T.-H."/>
            <person name="Dose S."/>
            <person name="de Haan M."/>
            <person name="Maarse A.C."/>
            <person name="Schaefer M."/>
            <person name="Mueller-Auer S."/>
            <person name="Gabel C."/>
            <person name="Fuchs M."/>
            <person name="Fartmann B."/>
            <person name="Granderath K."/>
            <person name="Dauner D."/>
            <person name="Herzl A."/>
            <person name="Neumann S."/>
            <person name="Argiriou A."/>
            <person name="Vitale D."/>
            <person name="Liguori R."/>
            <person name="Piravandi E."/>
            <person name="Massenet O."/>
            <person name="Quigley F."/>
            <person name="Clabauld G."/>
            <person name="Muendlein A."/>
            <person name="Felber R."/>
            <person name="Schnabl S."/>
            <person name="Hiller R."/>
            <person name="Schmidt W."/>
            <person name="Lecharny A."/>
            <person name="Aubourg S."/>
            <person name="Chefdor F."/>
            <person name="Cooke R."/>
            <person name="Berger C."/>
            <person name="Monfort A."/>
            <person name="Casacuberta E."/>
            <person name="Gibbons T."/>
            <person name="Weber N."/>
            <person name="Vandenbol M."/>
            <person name="Bargues M."/>
            <person name="Terol J."/>
            <person name="Torres A."/>
            <person name="Perez-Perez A."/>
            <person name="Purnelle B."/>
            <person name="Bent E."/>
            <person name="Johnson S."/>
            <person name="Tacon D."/>
            <person name="Jesse T."/>
            <person name="Heijnen L."/>
            <person name="Schwarz S."/>
            <person name="Scholler P."/>
            <person name="Heber S."/>
            <person name="Francs P."/>
            <person name="Bielke C."/>
            <person name="Frishman D."/>
            <person name="Haase D."/>
            <person name="Lemcke K."/>
            <person name="Mewes H.-W."/>
            <person name="Stocker S."/>
            <person name="Zaccaria P."/>
            <person name="Bevan M."/>
            <person name="Wilson R.K."/>
            <person name="de la Bastide M."/>
            <person name="Habermann K."/>
            <person name="Parnell L."/>
            <person name="Dedhia N."/>
            <person name="Gnoj L."/>
            <person name="Schutz K."/>
            <person name="Huang E."/>
            <person name="Spiegel L."/>
            <person name="Sekhon M."/>
            <person name="Murray J."/>
            <person name="Sheet P."/>
            <person name="Cordes M."/>
            <person name="Abu-Threideh J."/>
            <person name="Stoneking T."/>
            <person name="Kalicki J."/>
            <person name="Graves T."/>
            <person name="Harmon G."/>
            <person name="Edwards J."/>
            <person name="Latreille P."/>
            <person name="Courtney L."/>
            <person name="Cloud J."/>
            <person name="Abbott A."/>
            <person name="Scott K."/>
            <person name="Johnson D."/>
            <person name="Minx P."/>
            <person name="Bentley D."/>
            <person name="Fulton B."/>
            <person name="Miller N."/>
            <person name="Greco T."/>
            <person name="Kemp K."/>
            <person name="Kramer J."/>
            <person name="Fulton L."/>
            <person name="Mardis E."/>
            <person name="Dante M."/>
            <person name="Pepin K."/>
            <person name="Hillier L.W."/>
            <person name="Nelson J."/>
            <person name="Spieth J."/>
            <person name="Ryan E."/>
            <person name="Andrews S."/>
            <person name="Geisel C."/>
            <person name="Layman D."/>
            <person name="Du H."/>
            <person name="Ali J."/>
            <person name="Berghoff A."/>
            <person name="Jones K."/>
            <person name="Drone K."/>
            <person name="Cotton M."/>
            <person name="Joshu C."/>
            <person name="Antonoiu B."/>
            <person name="Zidanic M."/>
            <person name="Strong C."/>
            <person name="Sun H."/>
            <person name="Lamar B."/>
            <person name="Yordan C."/>
            <person name="Ma P."/>
            <person name="Zhong J."/>
            <person name="Preston R."/>
            <person name="Vil D."/>
            <person name="Shekher M."/>
            <person name="Matero A."/>
            <person name="Shah R."/>
            <person name="Swaby I.K."/>
            <person name="O'Shaughnessy A."/>
            <person name="Rodriguez M."/>
            <person name="Hoffman J."/>
            <person name="Till S."/>
            <person name="Granat S."/>
            <person name="Shohdy N."/>
            <person name="Hasegawa A."/>
            <person name="Hameed A."/>
            <person name="Lodhi M."/>
            <person name="Johnson A."/>
            <person name="Chen E."/>
            <person name="Marra M.A."/>
            <person name="Martienssen R."/>
            <person name="McCombie W.R."/>
        </authorList>
    </citation>
    <scope>NUCLEOTIDE SEQUENCE [LARGE SCALE GENOMIC DNA]</scope>
    <source>
        <strain>cv. Columbia</strain>
    </source>
</reference>
<reference key="2">
    <citation type="journal article" date="2017" name="Plant J.">
        <title>Araport11: a complete reannotation of the Arabidopsis thaliana reference genome.</title>
        <authorList>
            <person name="Cheng C.Y."/>
            <person name="Krishnakumar V."/>
            <person name="Chan A.P."/>
            <person name="Thibaud-Nissen F."/>
            <person name="Schobel S."/>
            <person name="Town C.D."/>
        </authorList>
    </citation>
    <scope>GENOME REANNOTATION</scope>
    <source>
        <strain>cv. Columbia</strain>
    </source>
</reference>
<reference key="3">
    <citation type="journal article" date="2003" name="Science">
        <title>Empirical analysis of transcriptional activity in the Arabidopsis genome.</title>
        <authorList>
            <person name="Yamada K."/>
            <person name="Lim J."/>
            <person name="Dale J.M."/>
            <person name="Chen H."/>
            <person name="Shinn P."/>
            <person name="Palm C.J."/>
            <person name="Southwick A.M."/>
            <person name="Wu H.C."/>
            <person name="Kim C.J."/>
            <person name="Nguyen M."/>
            <person name="Pham P.K."/>
            <person name="Cheuk R.F."/>
            <person name="Karlin-Newmann G."/>
            <person name="Liu S.X."/>
            <person name="Lam B."/>
            <person name="Sakano H."/>
            <person name="Wu T."/>
            <person name="Yu G."/>
            <person name="Miranda M."/>
            <person name="Quach H.L."/>
            <person name="Tripp M."/>
            <person name="Chang C.H."/>
            <person name="Lee J.M."/>
            <person name="Toriumi M.J."/>
            <person name="Chan M.M."/>
            <person name="Tang C.C."/>
            <person name="Onodera C.S."/>
            <person name="Deng J.M."/>
            <person name="Akiyama K."/>
            <person name="Ansari Y."/>
            <person name="Arakawa T."/>
            <person name="Banh J."/>
            <person name="Banno F."/>
            <person name="Bowser L."/>
            <person name="Brooks S.Y."/>
            <person name="Carninci P."/>
            <person name="Chao Q."/>
            <person name="Choy N."/>
            <person name="Enju A."/>
            <person name="Goldsmith A.D."/>
            <person name="Gurjal M."/>
            <person name="Hansen N.F."/>
            <person name="Hayashizaki Y."/>
            <person name="Johnson-Hopson C."/>
            <person name="Hsuan V.W."/>
            <person name="Iida K."/>
            <person name="Karnes M."/>
            <person name="Khan S."/>
            <person name="Koesema E."/>
            <person name="Ishida J."/>
            <person name="Jiang P.X."/>
            <person name="Jones T."/>
            <person name="Kawai J."/>
            <person name="Kamiya A."/>
            <person name="Meyers C."/>
            <person name="Nakajima M."/>
            <person name="Narusaka M."/>
            <person name="Seki M."/>
            <person name="Sakurai T."/>
            <person name="Satou M."/>
            <person name="Tamse R."/>
            <person name="Vaysberg M."/>
            <person name="Wallender E.K."/>
            <person name="Wong C."/>
            <person name="Yamamura Y."/>
            <person name="Yuan S."/>
            <person name="Shinozaki K."/>
            <person name="Davis R.W."/>
            <person name="Theologis A."/>
            <person name="Ecker J.R."/>
        </authorList>
    </citation>
    <scope>NUCLEOTIDE SEQUENCE [LARGE SCALE MRNA] (ISOFORM 1)</scope>
    <source>
        <strain>cv. Columbia</strain>
    </source>
</reference>
<reference key="4">
    <citation type="journal article" date="2004" name="Genome Res.">
        <title>Whole genome sequence comparisons and 'full-length' cDNA sequences: a combined approach to evaluate and improve Arabidopsis genome annotation.</title>
        <authorList>
            <person name="Castelli V."/>
            <person name="Aury J.-M."/>
            <person name="Jaillon O."/>
            <person name="Wincker P."/>
            <person name="Clepet C."/>
            <person name="Menard M."/>
            <person name="Cruaud C."/>
            <person name="Quetier F."/>
            <person name="Scarpelli C."/>
            <person name="Schaechter V."/>
            <person name="Temple G."/>
            <person name="Caboche M."/>
            <person name="Weissenbach J."/>
            <person name="Salanoubat M."/>
        </authorList>
    </citation>
    <scope>NUCLEOTIDE SEQUENCE [LARGE SCALE MRNA] (ISOFORM 2)</scope>
    <source>
        <strain>cv. Columbia</strain>
    </source>
</reference>
<reference key="5">
    <citation type="journal article" date="2008" name="BMC Genomics">
        <title>Genome-wide and expression analysis of protein phosphatase 2C in rice and Arabidopsis.</title>
        <authorList>
            <person name="Xue T."/>
            <person name="Wang D."/>
            <person name="Zhang S."/>
            <person name="Ehlting J."/>
            <person name="Ni F."/>
            <person name="Jacab S."/>
            <person name="Zheng C."/>
            <person name="Zhong Y."/>
        </authorList>
    </citation>
    <scope>GENE FAMILY</scope>
    <scope>NOMENCLATURE</scope>
</reference>